<organism>
    <name type="scientific">Gorilla gorilla gorilla</name>
    <name type="common">Western lowland gorilla</name>
    <dbReference type="NCBI Taxonomy" id="9595"/>
    <lineage>
        <taxon>Eukaryota</taxon>
        <taxon>Metazoa</taxon>
        <taxon>Chordata</taxon>
        <taxon>Craniata</taxon>
        <taxon>Vertebrata</taxon>
        <taxon>Euteleostomi</taxon>
        <taxon>Mammalia</taxon>
        <taxon>Eutheria</taxon>
        <taxon>Euarchontoglires</taxon>
        <taxon>Primates</taxon>
        <taxon>Haplorrhini</taxon>
        <taxon>Catarrhini</taxon>
        <taxon>Hominidae</taxon>
        <taxon>Gorilla</taxon>
    </lineage>
</organism>
<protein>
    <recommendedName>
        <fullName>Apolipoprotein C-I, acidic form</fullName>
        <shortName>Apo-CIA</shortName>
        <shortName>ApoC-IA</shortName>
    </recommendedName>
    <alternativeName>
        <fullName>Apolipoprotein C1A</fullName>
    </alternativeName>
    <component>
        <recommendedName>
            <fullName>Truncated apolipoprotein C-I, acidic form</fullName>
            <shortName>Apo-CIA'</shortName>
            <shortName>ApoC-IA'</shortName>
        </recommendedName>
    </component>
</protein>
<gene>
    <name type="primary">APOC1A</name>
</gene>
<keyword id="KW-0445">Lipid transport</keyword>
<keyword id="KW-1185">Reference proteome</keyword>
<keyword id="KW-0964">Secreted</keyword>
<keyword id="KW-0732">Signal</keyword>
<keyword id="KW-0813">Transport</keyword>
<feature type="signal peptide" evidence="3">
    <location>
        <begin position="1"/>
        <end position="26"/>
    </location>
</feature>
<feature type="chain" id="PRO_0000394027" description="Apolipoprotein C-I, acidic form">
    <location>
        <begin position="27"/>
        <end position="83"/>
    </location>
</feature>
<feature type="chain" id="PRO_0000394028" description="Truncated apolipoprotein C-I, acidic form" evidence="2">
    <location>
        <begin position="29"/>
        <end position="83"/>
    </location>
</feature>
<evidence type="ECO:0000250" key="1">
    <source>
        <dbReference type="UniProtKB" id="P02654"/>
    </source>
</evidence>
<evidence type="ECO:0000250" key="2">
    <source>
        <dbReference type="UniProtKB" id="P86336"/>
    </source>
</evidence>
<evidence type="ECO:0000255" key="3"/>
<evidence type="ECO:0000303" key="4">
    <source>
    </source>
</evidence>
<evidence type="ECO:0000305" key="5"/>
<sequence>MRLFLSLPVLVVVLSMVLEGPAPAQGAPEVSNPFDGLEELGKTLEDNTQELINRITQSELPAKMWDWFSETFRKVKEKLKIDS</sequence>
<reference key="1">
    <citation type="unpublished observations" date="2010-03">
        <authorList>
            <person name="Puppione D.L."/>
        </authorList>
    </citation>
    <scope>IDENTIFICATION</scope>
</reference>
<reference key="2">
    <citation type="journal article" date="2013" name="Front. Biol.">
        <title>Proteogenomic Review of the Changes in Primate apoC-I during Evolution.</title>
        <authorList>
            <person name="Puppione D."/>
            <person name="Whitelegge J.P."/>
        </authorList>
    </citation>
    <scope>REVIEW</scope>
</reference>
<reference key="3">
    <citation type="journal article" date="2014" name="Comp. Biochem. Physiol.">
        <title>Higher primates, but not New World monkeys, have a duplicate set of enhancers flanking their apoC-I genes.</title>
        <authorList>
            <person name="Puppione D.L."/>
        </authorList>
    </citation>
    <scope>GENE DUPLICATION</scope>
</reference>
<proteinExistence type="inferred from homology"/>
<accession>P0CF78</accession>
<name>APO1A_GORGO</name>
<comment type="subcellular location">
    <subcellularLocation>
        <location evidence="1">Secreted</location>
    </subcellularLocation>
</comment>
<comment type="miscellaneous">
    <text evidence="4">Apolipoprotein C-I is present in acidic (APOC1A) and basic (APOC1B) forms in P.paniscus, P.abelii and P.troglodytes and perhaps also in baboons and macaques. The two genes for ApoC-I arose through a duplication process that occurred after the divergence of New World monkeys from the human lineage. In human, the acidic form has become a pseudogene sometime between the divergence of bonobos and chimpanzees from the human lineage and the appearance of the Denisovans. Pseudogenization resulted when the codon for the penultimate amino acid in the signal sequence was changed to a stop codon.</text>
</comment>
<comment type="similarity">
    <text evidence="5">Belongs to the apolipoprotein C1 family.</text>
</comment>
<dbReference type="RefSeq" id="XP_018870626.1">
    <property type="nucleotide sequence ID" value="XM_019015081.1"/>
</dbReference>
<dbReference type="SMR" id="P0CF78"/>
<dbReference type="FunCoup" id="P0CF78">
    <property type="interactions" value="7"/>
</dbReference>
<dbReference type="STRING" id="9593.ENSGGOP00000030983"/>
<dbReference type="Ensembl" id="ENSGGOT00000067328.1">
    <property type="protein sequence ID" value="ENSGGOP00000030983.1"/>
    <property type="gene ID" value="ENSGGOG00000022078.2"/>
</dbReference>
<dbReference type="eggNOG" id="ENOG502SEU4">
    <property type="taxonomic scope" value="Eukaryota"/>
</dbReference>
<dbReference type="GeneTree" id="ENSGT00390000011584"/>
<dbReference type="HOGENOM" id="CLU_160094_1_0_1"/>
<dbReference type="InParanoid" id="P0CF78"/>
<dbReference type="OMA" id="PAKMWLE"/>
<dbReference type="Proteomes" id="UP000001519">
    <property type="component" value="Chromosome 19"/>
</dbReference>
<dbReference type="Bgee" id="ENSGGOG00000022078">
    <property type="expression patterns" value="Expressed in liver and 2 other cell types or tissues"/>
</dbReference>
<dbReference type="GO" id="GO:0034364">
    <property type="term" value="C:high-density lipoprotein particle"/>
    <property type="evidence" value="ECO:0000318"/>
    <property type="project" value="GO_Central"/>
</dbReference>
<dbReference type="GO" id="GO:0034361">
    <property type="term" value="C:very-low-density lipoprotein particle"/>
    <property type="evidence" value="ECO:0000318"/>
    <property type="project" value="GO_Central"/>
</dbReference>
<dbReference type="GO" id="GO:0005504">
    <property type="term" value="F:fatty acid binding"/>
    <property type="evidence" value="ECO:0000318"/>
    <property type="project" value="GO_Central"/>
</dbReference>
<dbReference type="GO" id="GO:0004859">
    <property type="term" value="F:phospholipase inhibitor activity"/>
    <property type="evidence" value="ECO:0000318"/>
    <property type="project" value="GO_Central"/>
</dbReference>
<dbReference type="GO" id="GO:0006869">
    <property type="term" value="P:lipid transport"/>
    <property type="evidence" value="ECO:0007669"/>
    <property type="project" value="UniProtKB-KW"/>
</dbReference>
<dbReference type="GO" id="GO:0042157">
    <property type="term" value="P:lipoprotein metabolic process"/>
    <property type="evidence" value="ECO:0007669"/>
    <property type="project" value="InterPro"/>
</dbReference>
<dbReference type="GO" id="GO:0032375">
    <property type="term" value="P:negative regulation of cholesterol transport"/>
    <property type="evidence" value="ECO:0000318"/>
    <property type="project" value="GO_Central"/>
</dbReference>
<dbReference type="GO" id="GO:0050995">
    <property type="term" value="P:negative regulation of lipid catabolic process"/>
    <property type="evidence" value="ECO:0000318"/>
    <property type="project" value="GO_Central"/>
</dbReference>
<dbReference type="GO" id="GO:0010916">
    <property type="term" value="P:negative regulation of very-low-density lipoprotein particle clearance"/>
    <property type="evidence" value="ECO:0000318"/>
    <property type="project" value="GO_Central"/>
</dbReference>
<dbReference type="GO" id="GO:0006641">
    <property type="term" value="P:triglyceride metabolic process"/>
    <property type="evidence" value="ECO:0000318"/>
    <property type="project" value="GO_Central"/>
</dbReference>
<dbReference type="GO" id="GO:0034447">
    <property type="term" value="P:very-low-density lipoprotein particle clearance"/>
    <property type="evidence" value="ECO:0000318"/>
    <property type="project" value="GO_Central"/>
</dbReference>
<dbReference type="Gene3D" id="4.10.260.30">
    <property type="entry name" value="Apolipoprotein C-I"/>
    <property type="match status" value="1"/>
</dbReference>
<dbReference type="InterPro" id="IPR043081">
    <property type="entry name" value="ApoC-1_sf"/>
</dbReference>
<dbReference type="InterPro" id="IPR006781">
    <property type="entry name" value="ApoC-I"/>
</dbReference>
<dbReference type="PANTHER" id="PTHR16565">
    <property type="entry name" value="APOLIPOPROTEIN C-I"/>
    <property type="match status" value="1"/>
</dbReference>
<dbReference type="PANTHER" id="PTHR16565:SF3">
    <property type="entry name" value="APOLIPOPROTEIN C-I, ACIDIC FORM"/>
    <property type="match status" value="1"/>
</dbReference>
<dbReference type="Pfam" id="PF04691">
    <property type="entry name" value="ApoC-I"/>
    <property type="match status" value="1"/>
</dbReference>